<protein>
    <recommendedName>
        <fullName>Rho GTPase-activating protein gacM</fullName>
    </recommendedName>
    <alternativeName>
        <fullName>GTPase activating factor for raC protein M</fullName>
    </alternativeName>
</protein>
<organism>
    <name type="scientific">Dictyostelium discoideum</name>
    <name type="common">Social amoeba</name>
    <dbReference type="NCBI Taxonomy" id="44689"/>
    <lineage>
        <taxon>Eukaryota</taxon>
        <taxon>Amoebozoa</taxon>
        <taxon>Evosea</taxon>
        <taxon>Eumycetozoa</taxon>
        <taxon>Dictyostelia</taxon>
        <taxon>Dictyosteliales</taxon>
        <taxon>Dictyosteliaceae</taxon>
        <taxon>Dictyostelium</taxon>
    </lineage>
</organism>
<accession>Q1ZXE1</accession>
<sequence length="896" mass="98231">MSSFIGWKKNSNSGGTPGASPTSSSPLNSTISNANSVSGLGPLGSISNTSSSSLSSSFQPIQIVNSNNNSPPLSSSSSSTSTYSTPNSSNDTIGKSSSSSVASAAAAGASSTSTYSSSSSLIDTSQFNNNYVGNIFGGQPINPNTEFGSSILNKFSKYLLNKGFNTEGIFKPHPELDNEIQNVKKNLIKDLSIGDMEQASLSTLTQNPLVIGEIMKQYLALLPEPLFSYQLYDSFLLTHSILSPTDRIWAYRFLLLYLPVGFRGAIKSVLGLLSRVHQCSESSKMNSESLAKIFSPVFLRPAEDMYYMKSDQSTLEEIVKLWIEEFDMISKPPTNPNPNSKVTILGTNNTLSQLQQQSNQHSSLPNISSLSSNLIQQQLQQQQQQQQQSHPTIGMSKITSSLSSSSLQVNLQTSPKSPQSPKLLLPTIPKDDQQQMTIVKQKPILSKPTPTTTPTLTPQTTNPPPVPASTLDNNNSNNNNNNNNNNSNNNNNNNNNNNNNNNNNNNITPNGSPLINKRLSIGGFALSPPGASTSFSSLSEQEVEDKVRKIKVSIDTMVSEQALLLIKNLLKSIEKEFNYNHIIKFSSIIRDAKKHMNESSEKQLSLTKANIREFIQEYPKPMSYNLLVSSIPKLDTTNFTEQEKKANDIKRASQVAADEISDYIYYFKLKISTFQLKEQVISTAQIFSKLKSILESPPPSLPTGSSWSDFENNSSNNNININNNINNSSSNNNNNNSSPNSSPLMGRLKTSNGLNSSSNSNVTPPTENQISADKATIRIIEVCSQEIKSRFGSMRSNLERVDINGAFEIGKHSRNVKAVLNDIYVQCKLIPPPDIKALPPGEDQLTTLRKALPPLFDRFVTQIDELTQHVFNNKASPEEITIIVDKLLFINRSLSM</sequence>
<proteinExistence type="evidence at transcript level"/>
<evidence type="ECO:0000250" key="1"/>
<evidence type="ECO:0000255" key="2">
    <source>
        <dbReference type="PROSITE-ProRule" id="PRU00172"/>
    </source>
</evidence>
<evidence type="ECO:0000256" key="3">
    <source>
        <dbReference type="SAM" id="MobiDB-lite"/>
    </source>
</evidence>
<evidence type="ECO:0000269" key="4">
    <source>
    </source>
</evidence>
<reference key="1">
    <citation type="journal article" date="2005" name="Nature">
        <title>The genome of the social amoeba Dictyostelium discoideum.</title>
        <authorList>
            <person name="Eichinger L."/>
            <person name="Pachebat J.A."/>
            <person name="Gloeckner G."/>
            <person name="Rajandream M.A."/>
            <person name="Sucgang R."/>
            <person name="Berriman M."/>
            <person name="Song J."/>
            <person name="Olsen R."/>
            <person name="Szafranski K."/>
            <person name="Xu Q."/>
            <person name="Tunggal B."/>
            <person name="Kummerfeld S."/>
            <person name="Madera M."/>
            <person name="Konfortov B.A."/>
            <person name="Rivero F."/>
            <person name="Bankier A.T."/>
            <person name="Lehmann R."/>
            <person name="Hamlin N."/>
            <person name="Davies R."/>
            <person name="Gaudet P."/>
            <person name="Fey P."/>
            <person name="Pilcher K."/>
            <person name="Chen G."/>
            <person name="Saunders D."/>
            <person name="Sodergren E.J."/>
            <person name="Davis P."/>
            <person name="Kerhornou A."/>
            <person name="Nie X."/>
            <person name="Hall N."/>
            <person name="Anjard C."/>
            <person name="Hemphill L."/>
            <person name="Bason N."/>
            <person name="Farbrother P."/>
            <person name="Desany B."/>
            <person name="Just E."/>
            <person name="Morio T."/>
            <person name="Rost R."/>
            <person name="Churcher C.M."/>
            <person name="Cooper J."/>
            <person name="Haydock S."/>
            <person name="van Driessche N."/>
            <person name="Cronin A."/>
            <person name="Goodhead I."/>
            <person name="Muzny D.M."/>
            <person name="Mourier T."/>
            <person name="Pain A."/>
            <person name="Lu M."/>
            <person name="Harper D."/>
            <person name="Lindsay R."/>
            <person name="Hauser H."/>
            <person name="James K.D."/>
            <person name="Quiles M."/>
            <person name="Madan Babu M."/>
            <person name="Saito T."/>
            <person name="Buchrieser C."/>
            <person name="Wardroper A."/>
            <person name="Felder M."/>
            <person name="Thangavelu M."/>
            <person name="Johnson D."/>
            <person name="Knights A."/>
            <person name="Loulseged H."/>
            <person name="Mungall K.L."/>
            <person name="Oliver K."/>
            <person name="Price C."/>
            <person name="Quail M.A."/>
            <person name="Urushihara H."/>
            <person name="Hernandez J."/>
            <person name="Rabbinowitsch E."/>
            <person name="Steffen D."/>
            <person name="Sanders M."/>
            <person name="Ma J."/>
            <person name="Kohara Y."/>
            <person name="Sharp S."/>
            <person name="Simmonds M.N."/>
            <person name="Spiegler S."/>
            <person name="Tivey A."/>
            <person name="Sugano S."/>
            <person name="White B."/>
            <person name="Walker D."/>
            <person name="Woodward J.R."/>
            <person name="Winckler T."/>
            <person name="Tanaka Y."/>
            <person name="Shaulsky G."/>
            <person name="Schleicher M."/>
            <person name="Weinstock G.M."/>
            <person name="Rosenthal A."/>
            <person name="Cox E.C."/>
            <person name="Chisholm R.L."/>
            <person name="Gibbs R.A."/>
            <person name="Loomis W.F."/>
            <person name="Platzer M."/>
            <person name="Kay R.R."/>
            <person name="Williams J.G."/>
            <person name="Dear P.H."/>
            <person name="Noegel A.A."/>
            <person name="Barrell B.G."/>
            <person name="Kuspa A."/>
        </authorList>
    </citation>
    <scope>NUCLEOTIDE SEQUENCE [LARGE SCALE GENOMIC DNA]</scope>
    <source>
        <strain>AX4</strain>
    </source>
</reference>
<reference key="2">
    <citation type="journal article" date="2008" name="BMC Genomics">
        <title>Genome-wide transcriptional changes induced by phagocytosis or growth on bacteria in Dictyostelium.</title>
        <authorList>
            <person name="Sillo A."/>
            <person name="Bloomfield G."/>
            <person name="Balest A."/>
            <person name="Balbo A."/>
            <person name="Pergolizzi B."/>
            <person name="Peracino B."/>
            <person name="Skelton J."/>
            <person name="Ivens A."/>
            <person name="Bozzaro S."/>
        </authorList>
    </citation>
    <scope>INDUCTION [LARGE SCALE ANALYSIS]</scope>
</reference>
<dbReference type="EMBL" id="AAFI02000104">
    <property type="protein sequence ID" value="EAS66846.1"/>
    <property type="molecule type" value="Genomic_DNA"/>
</dbReference>
<dbReference type="RefSeq" id="XP_001134529.1">
    <property type="nucleotide sequence ID" value="XM_001134529.1"/>
</dbReference>
<dbReference type="SMR" id="Q1ZXE1"/>
<dbReference type="FunCoup" id="Q1ZXE1">
    <property type="interactions" value="744"/>
</dbReference>
<dbReference type="STRING" id="44689.Q1ZXE1"/>
<dbReference type="GlyGen" id="Q1ZXE1">
    <property type="glycosylation" value="3 sites"/>
</dbReference>
<dbReference type="PaxDb" id="44689-DDB0233079"/>
<dbReference type="EnsemblProtists" id="EAS66846">
    <property type="protein sequence ID" value="EAS66846"/>
    <property type="gene ID" value="DDB_G0287895"/>
</dbReference>
<dbReference type="GeneID" id="8626347"/>
<dbReference type="KEGG" id="ddi:DDB_G0287895"/>
<dbReference type="dictyBase" id="DDB_G0287895">
    <property type="gene designation" value="gacM"/>
</dbReference>
<dbReference type="VEuPathDB" id="AmoebaDB:DDB_G0287895"/>
<dbReference type="eggNOG" id="KOG4407">
    <property type="taxonomic scope" value="Eukaryota"/>
</dbReference>
<dbReference type="HOGENOM" id="CLU_323009_0_0_1"/>
<dbReference type="InParanoid" id="Q1ZXE1"/>
<dbReference type="OMA" id="IWAYRFL"/>
<dbReference type="Reactome" id="R-DDI-9013148">
    <property type="pathway name" value="CDC42 GTPase cycle"/>
</dbReference>
<dbReference type="Reactome" id="R-DDI-9013149">
    <property type="pathway name" value="RAC1 GTPase cycle"/>
</dbReference>
<dbReference type="PRO" id="PR:Q1ZXE1"/>
<dbReference type="Proteomes" id="UP000002195">
    <property type="component" value="Chromosome 5"/>
</dbReference>
<dbReference type="GO" id="GO:0005737">
    <property type="term" value="C:cytoplasm"/>
    <property type="evidence" value="ECO:0007669"/>
    <property type="project" value="UniProtKB-SubCell"/>
</dbReference>
<dbReference type="GO" id="GO:0005096">
    <property type="term" value="F:GTPase activator activity"/>
    <property type="evidence" value="ECO:0007669"/>
    <property type="project" value="UniProtKB-KW"/>
</dbReference>
<dbReference type="GO" id="GO:0007165">
    <property type="term" value="P:signal transduction"/>
    <property type="evidence" value="ECO:0007669"/>
    <property type="project" value="InterPro"/>
</dbReference>
<dbReference type="CDD" id="cd00159">
    <property type="entry name" value="RhoGAP"/>
    <property type="match status" value="1"/>
</dbReference>
<dbReference type="Gene3D" id="1.10.555.10">
    <property type="entry name" value="Rho GTPase activation protein"/>
    <property type="match status" value="1"/>
</dbReference>
<dbReference type="InterPro" id="IPR051854">
    <property type="entry name" value="Rho-type_GAP"/>
</dbReference>
<dbReference type="InterPro" id="IPR008936">
    <property type="entry name" value="Rho_GTPase_activation_prot"/>
</dbReference>
<dbReference type="InterPro" id="IPR000198">
    <property type="entry name" value="RhoGAP_dom"/>
</dbReference>
<dbReference type="PANTHER" id="PTHR46075">
    <property type="entry name" value="CHIMERIN FAMILY MEMBER"/>
    <property type="match status" value="1"/>
</dbReference>
<dbReference type="PANTHER" id="PTHR46075:SF2">
    <property type="entry name" value="RHO GTPASE ACTIVATING PROTEIN AT 5A, ISOFORM A"/>
    <property type="match status" value="1"/>
</dbReference>
<dbReference type="Pfam" id="PF00620">
    <property type="entry name" value="RhoGAP"/>
    <property type="match status" value="1"/>
</dbReference>
<dbReference type="SMART" id="SM00324">
    <property type="entry name" value="RhoGAP"/>
    <property type="match status" value="1"/>
</dbReference>
<dbReference type="SUPFAM" id="SSF48350">
    <property type="entry name" value="GTPase activation domain, GAP"/>
    <property type="match status" value="1"/>
</dbReference>
<dbReference type="PROSITE" id="PS50238">
    <property type="entry name" value="RHOGAP"/>
    <property type="match status" value="1"/>
</dbReference>
<comment type="function">
    <text evidence="1">Rho GTPase-activating protein involved in the signal transduction pathway.</text>
</comment>
<comment type="subcellular location">
    <subcellularLocation>
        <location evidence="1">Cytoplasm</location>
    </subcellularLocation>
</comment>
<comment type="induction">
    <text evidence="4">Down-regulated by phagocytic stimuli.</text>
</comment>
<keyword id="KW-0963">Cytoplasm</keyword>
<keyword id="KW-0343">GTPase activation</keyword>
<keyword id="KW-1185">Reference proteome</keyword>
<gene>
    <name type="primary">gacM</name>
    <name type="ORF">DDB_G0287895</name>
</gene>
<feature type="chain" id="PRO_0000380211" description="Rho GTPase-activating protein gacM">
    <location>
        <begin position="1"/>
        <end position="896"/>
    </location>
</feature>
<feature type="domain" description="Rho-GAP" evidence="2">
    <location>
        <begin position="139"/>
        <end position="330"/>
    </location>
</feature>
<feature type="region of interest" description="Disordered" evidence="3">
    <location>
        <begin position="1"/>
        <end position="97"/>
    </location>
</feature>
<feature type="region of interest" description="Disordered" evidence="3">
    <location>
        <begin position="375"/>
        <end position="514"/>
    </location>
</feature>
<feature type="region of interest" description="Disordered" evidence="3">
    <location>
        <begin position="701"/>
        <end position="770"/>
    </location>
</feature>
<feature type="compositionally biased region" description="Low complexity" evidence="3">
    <location>
        <begin position="10"/>
        <end position="26"/>
    </location>
</feature>
<feature type="compositionally biased region" description="Polar residues" evidence="3">
    <location>
        <begin position="27"/>
        <end position="38"/>
    </location>
</feature>
<feature type="compositionally biased region" description="Low complexity" evidence="3">
    <location>
        <begin position="45"/>
        <end position="57"/>
    </location>
</feature>
<feature type="compositionally biased region" description="Low complexity" evidence="3">
    <location>
        <begin position="65"/>
        <end position="97"/>
    </location>
</feature>
<feature type="compositionally biased region" description="Low complexity" evidence="3">
    <location>
        <begin position="375"/>
        <end position="391"/>
    </location>
</feature>
<feature type="compositionally biased region" description="Low complexity" evidence="3">
    <location>
        <begin position="400"/>
        <end position="427"/>
    </location>
</feature>
<feature type="compositionally biased region" description="Low complexity" evidence="3">
    <location>
        <begin position="448"/>
        <end position="460"/>
    </location>
</feature>
<feature type="compositionally biased region" description="Low complexity" evidence="3">
    <location>
        <begin position="473"/>
        <end position="506"/>
    </location>
</feature>
<feature type="compositionally biased region" description="Polar residues" evidence="3">
    <location>
        <begin position="702"/>
        <end position="711"/>
    </location>
</feature>
<feature type="compositionally biased region" description="Low complexity" evidence="3">
    <location>
        <begin position="712"/>
        <end position="743"/>
    </location>
</feature>
<feature type="compositionally biased region" description="Low complexity" evidence="3">
    <location>
        <begin position="751"/>
        <end position="761"/>
    </location>
</feature>
<feature type="site" description="Arginine finger; crucial for GTP hydrolysis by stabilizing the transition state" evidence="2">
    <location>
        <position position="171"/>
    </location>
</feature>
<name>GACM_DICDI</name>